<reference key="1">
    <citation type="journal article" date="2008" name="DNA Res.">
        <title>Complete genome sequence and comparative analysis of the wild-type commensal Escherichia coli strain SE11 isolated from a healthy adult.</title>
        <authorList>
            <person name="Oshima K."/>
            <person name="Toh H."/>
            <person name="Ogura Y."/>
            <person name="Sasamoto H."/>
            <person name="Morita H."/>
            <person name="Park S.-H."/>
            <person name="Ooka T."/>
            <person name="Iyoda S."/>
            <person name="Taylor T.D."/>
            <person name="Hayashi T."/>
            <person name="Itoh K."/>
            <person name="Hattori M."/>
        </authorList>
    </citation>
    <scope>NUCLEOTIDE SEQUENCE [LARGE SCALE GENOMIC DNA]</scope>
    <source>
        <strain>SE11</strain>
    </source>
</reference>
<dbReference type="EC" id="6.1.1.18" evidence="1"/>
<dbReference type="EMBL" id="AP009240">
    <property type="protein sequence ID" value="BAG76265.1"/>
    <property type="molecule type" value="Genomic_DNA"/>
</dbReference>
<dbReference type="RefSeq" id="WP_001287154.1">
    <property type="nucleotide sequence ID" value="NC_011415.1"/>
</dbReference>
<dbReference type="SMR" id="B6HYN9"/>
<dbReference type="GeneID" id="93776805"/>
<dbReference type="KEGG" id="ecy:ECSE_0741"/>
<dbReference type="HOGENOM" id="CLU_001882_2_3_6"/>
<dbReference type="Proteomes" id="UP000008199">
    <property type="component" value="Chromosome"/>
</dbReference>
<dbReference type="GO" id="GO:0005829">
    <property type="term" value="C:cytosol"/>
    <property type="evidence" value="ECO:0007669"/>
    <property type="project" value="TreeGrafter"/>
</dbReference>
<dbReference type="GO" id="GO:0005524">
    <property type="term" value="F:ATP binding"/>
    <property type="evidence" value="ECO:0007669"/>
    <property type="project" value="UniProtKB-UniRule"/>
</dbReference>
<dbReference type="GO" id="GO:0004819">
    <property type="term" value="F:glutamine-tRNA ligase activity"/>
    <property type="evidence" value="ECO:0007669"/>
    <property type="project" value="UniProtKB-UniRule"/>
</dbReference>
<dbReference type="GO" id="GO:0006425">
    <property type="term" value="P:glutaminyl-tRNA aminoacylation"/>
    <property type="evidence" value="ECO:0007669"/>
    <property type="project" value="InterPro"/>
</dbReference>
<dbReference type="GO" id="GO:0006424">
    <property type="term" value="P:glutamyl-tRNA aminoacylation"/>
    <property type="evidence" value="ECO:0007669"/>
    <property type="project" value="UniProtKB-UniRule"/>
</dbReference>
<dbReference type="CDD" id="cd00807">
    <property type="entry name" value="GlnRS_core"/>
    <property type="match status" value="1"/>
</dbReference>
<dbReference type="FunFam" id="1.10.1160.10:FF:000001">
    <property type="entry name" value="Glutamine--tRNA ligase"/>
    <property type="match status" value="1"/>
</dbReference>
<dbReference type="FunFam" id="2.40.240.10:FF:000001">
    <property type="entry name" value="Glutamine--tRNA ligase"/>
    <property type="match status" value="1"/>
</dbReference>
<dbReference type="FunFam" id="2.40.240.10:FF:000003">
    <property type="entry name" value="Glutamine--tRNA ligase"/>
    <property type="match status" value="1"/>
</dbReference>
<dbReference type="FunFam" id="3.90.800.10:FF:000001">
    <property type="entry name" value="Glutamine--tRNA ligase"/>
    <property type="match status" value="1"/>
</dbReference>
<dbReference type="FunFam" id="3.40.50.620:FF:000037">
    <property type="entry name" value="Glutamine--tRNA ligase cytoplasmic"/>
    <property type="match status" value="1"/>
</dbReference>
<dbReference type="Gene3D" id="1.10.1160.10">
    <property type="entry name" value="Glutamyl-trna Synthetase, Domain 2"/>
    <property type="match status" value="1"/>
</dbReference>
<dbReference type="Gene3D" id="3.90.800.10">
    <property type="entry name" value="Glutamyl-tRNA Synthetase, Domain 3"/>
    <property type="match status" value="1"/>
</dbReference>
<dbReference type="Gene3D" id="3.40.50.620">
    <property type="entry name" value="HUPs"/>
    <property type="match status" value="1"/>
</dbReference>
<dbReference type="Gene3D" id="2.40.240.10">
    <property type="entry name" value="Ribosomal Protein L25, Chain P"/>
    <property type="match status" value="2"/>
</dbReference>
<dbReference type="HAMAP" id="MF_00126">
    <property type="entry name" value="Gln_tRNA_synth"/>
    <property type="match status" value="1"/>
</dbReference>
<dbReference type="InterPro" id="IPR001412">
    <property type="entry name" value="aa-tRNA-synth_I_CS"/>
</dbReference>
<dbReference type="InterPro" id="IPR004514">
    <property type="entry name" value="Gln-tRNA-synth"/>
</dbReference>
<dbReference type="InterPro" id="IPR050132">
    <property type="entry name" value="Gln/Glu-tRNA_Ligase"/>
</dbReference>
<dbReference type="InterPro" id="IPR022861">
    <property type="entry name" value="Gln_tRNA_ligase_bac"/>
</dbReference>
<dbReference type="InterPro" id="IPR000924">
    <property type="entry name" value="Glu/Gln-tRNA-synth"/>
</dbReference>
<dbReference type="InterPro" id="IPR020058">
    <property type="entry name" value="Glu/Gln-tRNA-synth_Ib_cat-dom"/>
</dbReference>
<dbReference type="InterPro" id="IPR020059">
    <property type="entry name" value="Glu/Gln-tRNA-synth_Ib_codon-bd"/>
</dbReference>
<dbReference type="InterPro" id="IPR020061">
    <property type="entry name" value="Glu_tRNA_lig_a-bdl"/>
</dbReference>
<dbReference type="InterPro" id="IPR020056">
    <property type="entry name" value="Rbsml_bL25/Gln-tRNA_synth_N"/>
</dbReference>
<dbReference type="InterPro" id="IPR011035">
    <property type="entry name" value="Ribosomal_bL25/Gln-tRNA_synth"/>
</dbReference>
<dbReference type="InterPro" id="IPR014729">
    <property type="entry name" value="Rossmann-like_a/b/a_fold"/>
</dbReference>
<dbReference type="InterPro" id="IPR049437">
    <property type="entry name" value="tRNA-synt_1c_C2"/>
</dbReference>
<dbReference type="NCBIfam" id="TIGR00440">
    <property type="entry name" value="glnS"/>
    <property type="match status" value="1"/>
</dbReference>
<dbReference type="NCBIfam" id="NF011291">
    <property type="entry name" value="PRK14703.1"/>
    <property type="match status" value="1"/>
</dbReference>
<dbReference type="PANTHER" id="PTHR43097:SF5">
    <property type="entry name" value="GLUTAMATE--TRNA LIGASE"/>
    <property type="match status" value="1"/>
</dbReference>
<dbReference type="PANTHER" id="PTHR43097">
    <property type="entry name" value="GLUTAMINE-TRNA LIGASE"/>
    <property type="match status" value="1"/>
</dbReference>
<dbReference type="Pfam" id="PF00749">
    <property type="entry name" value="tRNA-synt_1c"/>
    <property type="match status" value="1"/>
</dbReference>
<dbReference type="Pfam" id="PF03950">
    <property type="entry name" value="tRNA-synt_1c_C"/>
    <property type="match status" value="1"/>
</dbReference>
<dbReference type="Pfam" id="PF20974">
    <property type="entry name" value="tRNA-synt_1c_C2"/>
    <property type="match status" value="1"/>
</dbReference>
<dbReference type="PRINTS" id="PR00987">
    <property type="entry name" value="TRNASYNTHGLU"/>
</dbReference>
<dbReference type="SUPFAM" id="SSF52374">
    <property type="entry name" value="Nucleotidylyl transferase"/>
    <property type="match status" value="1"/>
</dbReference>
<dbReference type="SUPFAM" id="SSF50715">
    <property type="entry name" value="Ribosomal protein L25-like"/>
    <property type="match status" value="1"/>
</dbReference>
<dbReference type="PROSITE" id="PS00178">
    <property type="entry name" value="AA_TRNA_LIGASE_I"/>
    <property type="match status" value="1"/>
</dbReference>
<accession>B6HYN9</accession>
<gene>
    <name evidence="1" type="primary">glnS</name>
    <name type="ordered locus">ECSE_0741</name>
</gene>
<proteinExistence type="inferred from homology"/>
<protein>
    <recommendedName>
        <fullName evidence="1">Glutamine--tRNA ligase</fullName>
        <ecNumber evidence="1">6.1.1.18</ecNumber>
    </recommendedName>
    <alternativeName>
        <fullName evidence="1">Glutaminyl-tRNA synthetase</fullName>
        <shortName evidence="1">GlnRS</shortName>
    </alternativeName>
</protein>
<feature type="chain" id="PRO_1000095490" description="Glutamine--tRNA ligase">
    <location>
        <begin position="1"/>
        <end position="554"/>
    </location>
</feature>
<feature type="region of interest" description="Interaction with tRNA" evidence="1">
    <location>
        <begin position="317"/>
        <end position="324"/>
    </location>
</feature>
<feature type="short sequence motif" description="'HIGH' region" evidence="1">
    <location>
        <begin position="34"/>
        <end position="44"/>
    </location>
</feature>
<feature type="short sequence motif" description="'KMSKS' region" evidence="1">
    <location>
        <begin position="268"/>
        <end position="272"/>
    </location>
</feature>
<feature type="binding site" evidence="1">
    <location>
        <begin position="35"/>
        <end position="37"/>
    </location>
    <ligand>
        <name>ATP</name>
        <dbReference type="ChEBI" id="CHEBI:30616"/>
    </ligand>
</feature>
<feature type="binding site" evidence="1">
    <location>
        <begin position="41"/>
        <end position="47"/>
    </location>
    <ligand>
        <name>ATP</name>
        <dbReference type="ChEBI" id="CHEBI:30616"/>
    </ligand>
</feature>
<feature type="binding site" evidence="1">
    <location>
        <position position="67"/>
    </location>
    <ligand>
        <name>L-glutamine</name>
        <dbReference type="ChEBI" id="CHEBI:58359"/>
    </ligand>
</feature>
<feature type="binding site" evidence="1">
    <location>
        <position position="212"/>
    </location>
    <ligand>
        <name>L-glutamine</name>
        <dbReference type="ChEBI" id="CHEBI:58359"/>
    </ligand>
</feature>
<feature type="binding site" evidence="1">
    <location>
        <position position="231"/>
    </location>
    <ligand>
        <name>ATP</name>
        <dbReference type="ChEBI" id="CHEBI:30616"/>
    </ligand>
</feature>
<feature type="binding site" evidence="1">
    <location>
        <begin position="261"/>
        <end position="262"/>
    </location>
    <ligand>
        <name>ATP</name>
        <dbReference type="ChEBI" id="CHEBI:30616"/>
    </ligand>
</feature>
<feature type="binding site" evidence="1">
    <location>
        <begin position="269"/>
        <end position="271"/>
    </location>
    <ligand>
        <name>ATP</name>
        <dbReference type="ChEBI" id="CHEBI:30616"/>
    </ligand>
</feature>
<comment type="catalytic activity">
    <reaction evidence="1">
        <text>tRNA(Gln) + L-glutamine + ATP = L-glutaminyl-tRNA(Gln) + AMP + diphosphate</text>
        <dbReference type="Rhea" id="RHEA:20121"/>
        <dbReference type="Rhea" id="RHEA-COMP:9662"/>
        <dbReference type="Rhea" id="RHEA-COMP:9681"/>
        <dbReference type="ChEBI" id="CHEBI:30616"/>
        <dbReference type="ChEBI" id="CHEBI:33019"/>
        <dbReference type="ChEBI" id="CHEBI:58359"/>
        <dbReference type="ChEBI" id="CHEBI:78442"/>
        <dbReference type="ChEBI" id="CHEBI:78521"/>
        <dbReference type="ChEBI" id="CHEBI:456215"/>
        <dbReference type="EC" id="6.1.1.18"/>
    </reaction>
</comment>
<comment type="subunit">
    <text evidence="1">Monomer.</text>
</comment>
<comment type="subcellular location">
    <subcellularLocation>
        <location evidence="1">Cytoplasm</location>
    </subcellularLocation>
</comment>
<comment type="similarity">
    <text evidence="1">Belongs to the class-I aminoacyl-tRNA synthetase family.</text>
</comment>
<sequence length="554" mass="63478">MSEAEARPTNFIRQIIDEDLASGKHTTVHTRFPPEPNGYLHIGHAKSICLNFGIAQDYKGQCNLRFDDTNPVKEDIEYVESIKNDVEWLGFHWSGNVRYSSDYFDQLHAYAIELINKGLAYVDELTPEQIREYRGTLTQPGKNSPYRDRSVEENLALFEKMRAGGFEEGKACLRAKIDMASPFIVMRDPVLYRIKFAEHHQTGNKWCIYPMYDFTHCISDALEGITHSLCTLEFQDNRRLYDWVLDNITIPVHPRQYEFSRLNLEYTVMSKRKLNLLVTDKHVEGWDDPRMPTISGLRRRGYTAASIREFCKRIGVTKQDNTIEMASLESCIREDLNENAPRAMAVIDPVKLVIENYQGEGEMVTMPNHPNKPEMGSRQVPFSGEIWIDRADFREEANKQYKRLVLGKEVRLRNAYVIKAERVEKDAEGNITTIFCTYDADTLSKDPADGRKVKGVIHWVSAAHALPVEIRLYDRLFSVPNPGAADDFLSVINPESLVIKQGFAEPSLKDAVAGKAFQFEREGYFCLDSRHSTAEKPVFNRTVGLRDTWAKVGE</sequence>
<organism>
    <name type="scientific">Escherichia coli (strain SE11)</name>
    <dbReference type="NCBI Taxonomy" id="409438"/>
    <lineage>
        <taxon>Bacteria</taxon>
        <taxon>Pseudomonadati</taxon>
        <taxon>Pseudomonadota</taxon>
        <taxon>Gammaproteobacteria</taxon>
        <taxon>Enterobacterales</taxon>
        <taxon>Enterobacteriaceae</taxon>
        <taxon>Escherichia</taxon>
    </lineage>
</organism>
<name>SYQ_ECOSE</name>
<keyword id="KW-0030">Aminoacyl-tRNA synthetase</keyword>
<keyword id="KW-0067">ATP-binding</keyword>
<keyword id="KW-0963">Cytoplasm</keyword>
<keyword id="KW-0436">Ligase</keyword>
<keyword id="KW-0547">Nucleotide-binding</keyword>
<keyword id="KW-0648">Protein biosynthesis</keyword>
<evidence type="ECO:0000255" key="1">
    <source>
        <dbReference type="HAMAP-Rule" id="MF_00126"/>
    </source>
</evidence>